<evidence type="ECO:0000255" key="1">
    <source>
        <dbReference type="HAMAP-Rule" id="MF_00279"/>
    </source>
</evidence>
<keyword id="KW-0963">Cytoplasm</keyword>
<keyword id="KW-0664">Pyridoxine biosynthesis</keyword>
<keyword id="KW-1185">Reference proteome</keyword>
<keyword id="KW-0808">Transferase</keyword>
<feature type="chain" id="PRO_0000190106" description="Pyridoxine 5'-phosphate synthase">
    <location>
        <begin position="1"/>
        <end position="242"/>
    </location>
</feature>
<feature type="active site" description="Proton acceptor" evidence="1">
    <location>
        <position position="42"/>
    </location>
</feature>
<feature type="active site" description="Proton acceptor" evidence="1">
    <location>
        <position position="69"/>
    </location>
</feature>
<feature type="active site" description="Proton donor" evidence="1">
    <location>
        <position position="193"/>
    </location>
</feature>
<feature type="binding site" evidence="1">
    <location>
        <position position="6"/>
    </location>
    <ligand>
        <name>3-amino-2-oxopropyl phosphate</name>
        <dbReference type="ChEBI" id="CHEBI:57279"/>
    </ligand>
</feature>
<feature type="binding site" evidence="1">
    <location>
        <begin position="8"/>
        <end position="9"/>
    </location>
    <ligand>
        <name>1-deoxy-D-xylulose 5-phosphate</name>
        <dbReference type="ChEBI" id="CHEBI:57792"/>
    </ligand>
</feature>
<feature type="binding site" evidence="1">
    <location>
        <position position="17"/>
    </location>
    <ligand>
        <name>3-amino-2-oxopropyl phosphate</name>
        <dbReference type="ChEBI" id="CHEBI:57279"/>
    </ligand>
</feature>
<feature type="binding site" evidence="1">
    <location>
        <position position="44"/>
    </location>
    <ligand>
        <name>1-deoxy-D-xylulose 5-phosphate</name>
        <dbReference type="ChEBI" id="CHEBI:57792"/>
    </ligand>
</feature>
<feature type="binding site" evidence="1">
    <location>
        <position position="49"/>
    </location>
    <ligand>
        <name>1-deoxy-D-xylulose 5-phosphate</name>
        <dbReference type="ChEBI" id="CHEBI:57792"/>
    </ligand>
</feature>
<feature type="binding site" evidence="1">
    <location>
        <position position="99"/>
    </location>
    <ligand>
        <name>1-deoxy-D-xylulose 5-phosphate</name>
        <dbReference type="ChEBI" id="CHEBI:57792"/>
    </ligand>
</feature>
<feature type="binding site" evidence="1">
    <location>
        <position position="194"/>
    </location>
    <ligand>
        <name>3-amino-2-oxopropyl phosphate</name>
        <dbReference type="ChEBI" id="CHEBI:57279"/>
    </ligand>
</feature>
<feature type="binding site" evidence="1">
    <location>
        <begin position="217"/>
        <end position="218"/>
    </location>
    <ligand>
        <name>3-amino-2-oxopropyl phosphate</name>
        <dbReference type="ChEBI" id="CHEBI:57279"/>
    </ligand>
</feature>
<feature type="site" description="Transition state stabilizer" evidence="1">
    <location>
        <position position="150"/>
    </location>
</feature>
<sequence>MRLGVNVDHVATVRQARRTFEPSPVFAALIAQQAGADQITLHLREDRRHIQDRDLELIKELITIPVNLEMAPTEEMREIALRVKPDRITLVPERREEITTEGGLDVVSLKEKLKEYLKPIKEAGIEVSLFIEAQKEQIDASVEVGADAIEIHTGRYANLWNEHRFEEAKEELNRIKEAAIYAKEKGLKVYAGHGLTYHNVKDFVRELKGYVEELNIGHSIVANAVIFGFERAVKEMLNLIKT</sequence>
<proteinExistence type="inferred from homology"/>
<reference key="1">
    <citation type="journal article" date="1998" name="Nature">
        <title>The complete genome of the hyperthermophilic bacterium Aquifex aeolicus.</title>
        <authorList>
            <person name="Deckert G."/>
            <person name="Warren P.V."/>
            <person name="Gaasterland T."/>
            <person name="Young W.G."/>
            <person name="Lenox A.L."/>
            <person name="Graham D.E."/>
            <person name="Overbeek R."/>
            <person name="Snead M.A."/>
            <person name="Keller M."/>
            <person name="Aujay M."/>
            <person name="Huber R."/>
            <person name="Feldman R.A."/>
            <person name="Short J.M."/>
            <person name="Olsen G.J."/>
            <person name="Swanson R.V."/>
        </authorList>
    </citation>
    <scope>NUCLEOTIDE SEQUENCE [LARGE SCALE GENOMIC DNA]</scope>
    <source>
        <strain>VF5</strain>
    </source>
</reference>
<organism>
    <name type="scientific">Aquifex aeolicus (strain VF5)</name>
    <dbReference type="NCBI Taxonomy" id="224324"/>
    <lineage>
        <taxon>Bacteria</taxon>
        <taxon>Pseudomonadati</taxon>
        <taxon>Aquificota</taxon>
        <taxon>Aquificia</taxon>
        <taxon>Aquificales</taxon>
        <taxon>Aquificaceae</taxon>
        <taxon>Aquifex</taxon>
    </lineage>
</organism>
<protein>
    <recommendedName>
        <fullName evidence="1">Pyridoxine 5'-phosphate synthase</fullName>
        <shortName evidence="1">PNP synthase</shortName>
        <ecNumber evidence="1">2.6.99.2</ecNumber>
    </recommendedName>
</protein>
<accession>O67417</accession>
<gene>
    <name evidence="1" type="primary">pdxJ</name>
    <name type="ordered locus">aq_1423</name>
</gene>
<dbReference type="EC" id="2.6.99.2" evidence="1"/>
<dbReference type="EMBL" id="AE000657">
    <property type="protein sequence ID" value="AAC07372.1"/>
    <property type="molecule type" value="Genomic_DNA"/>
</dbReference>
<dbReference type="PIR" id="G70423">
    <property type="entry name" value="G70423"/>
</dbReference>
<dbReference type="RefSeq" id="NP_213982.1">
    <property type="nucleotide sequence ID" value="NC_000918.1"/>
</dbReference>
<dbReference type="RefSeq" id="WP_010880920.1">
    <property type="nucleotide sequence ID" value="NC_000918.1"/>
</dbReference>
<dbReference type="SMR" id="O67417"/>
<dbReference type="FunCoup" id="O67417">
    <property type="interactions" value="274"/>
</dbReference>
<dbReference type="STRING" id="224324.aq_1423"/>
<dbReference type="EnsemblBacteria" id="AAC07372">
    <property type="protein sequence ID" value="AAC07372"/>
    <property type="gene ID" value="aq_1423"/>
</dbReference>
<dbReference type="KEGG" id="aae:aq_1423"/>
<dbReference type="PATRIC" id="fig|224324.8.peg.1113"/>
<dbReference type="eggNOG" id="COG0854">
    <property type="taxonomic scope" value="Bacteria"/>
</dbReference>
<dbReference type="HOGENOM" id="CLU_074563_0_0_0"/>
<dbReference type="InParanoid" id="O67417"/>
<dbReference type="OrthoDB" id="9806590at2"/>
<dbReference type="UniPathway" id="UPA00244">
    <property type="reaction ID" value="UER00313"/>
</dbReference>
<dbReference type="Proteomes" id="UP000000798">
    <property type="component" value="Chromosome"/>
</dbReference>
<dbReference type="GO" id="GO:0005829">
    <property type="term" value="C:cytosol"/>
    <property type="evidence" value="ECO:0000318"/>
    <property type="project" value="GO_Central"/>
</dbReference>
<dbReference type="GO" id="GO:0033856">
    <property type="term" value="F:pyridoxine 5'-phosphate synthase activity"/>
    <property type="evidence" value="ECO:0000318"/>
    <property type="project" value="GO_Central"/>
</dbReference>
<dbReference type="GO" id="GO:0008615">
    <property type="term" value="P:pyridoxine biosynthetic process"/>
    <property type="evidence" value="ECO:0000318"/>
    <property type="project" value="GO_Central"/>
</dbReference>
<dbReference type="CDD" id="cd00003">
    <property type="entry name" value="PNPsynthase"/>
    <property type="match status" value="1"/>
</dbReference>
<dbReference type="Gene3D" id="3.20.20.70">
    <property type="entry name" value="Aldolase class I"/>
    <property type="match status" value="1"/>
</dbReference>
<dbReference type="HAMAP" id="MF_00279">
    <property type="entry name" value="PdxJ"/>
    <property type="match status" value="1"/>
</dbReference>
<dbReference type="InterPro" id="IPR013785">
    <property type="entry name" value="Aldolase_TIM"/>
</dbReference>
<dbReference type="InterPro" id="IPR004569">
    <property type="entry name" value="PyrdxlP_synth_PdxJ"/>
</dbReference>
<dbReference type="InterPro" id="IPR036130">
    <property type="entry name" value="Pyridoxine-5'_phos_synth"/>
</dbReference>
<dbReference type="NCBIfam" id="TIGR00559">
    <property type="entry name" value="pdxJ"/>
    <property type="match status" value="1"/>
</dbReference>
<dbReference type="NCBIfam" id="NF003625">
    <property type="entry name" value="PRK05265.1-3"/>
    <property type="match status" value="1"/>
</dbReference>
<dbReference type="NCBIfam" id="NF003627">
    <property type="entry name" value="PRK05265.1-5"/>
    <property type="match status" value="1"/>
</dbReference>
<dbReference type="PANTHER" id="PTHR30456">
    <property type="entry name" value="PYRIDOXINE 5'-PHOSPHATE SYNTHASE"/>
    <property type="match status" value="1"/>
</dbReference>
<dbReference type="PANTHER" id="PTHR30456:SF0">
    <property type="entry name" value="PYRIDOXINE 5'-PHOSPHATE SYNTHASE"/>
    <property type="match status" value="1"/>
</dbReference>
<dbReference type="Pfam" id="PF03740">
    <property type="entry name" value="PdxJ"/>
    <property type="match status" value="1"/>
</dbReference>
<dbReference type="SUPFAM" id="SSF63892">
    <property type="entry name" value="Pyridoxine 5'-phosphate synthase"/>
    <property type="match status" value="1"/>
</dbReference>
<name>PDXJ_AQUAE</name>
<comment type="function">
    <text evidence="1">Catalyzes the complicated ring closure reaction between the two acyclic compounds 1-deoxy-D-xylulose-5-phosphate (DXP) and 3-amino-2-oxopropyl phosphate (1-amino-acetone-3-phosphate or AAP) to form pyridoxine 5'-phosphate (PNP) and inorganic phosphate.</text>
</comment>
<comment type="catalytic activity">
    <reaction evidence="1">
        <text>3-amino-2-oxopropyl phosphate + 1-deoxy-D-xylulose 5-phosphate = pyridoxine 5'-phosphate + phosphate + 2 H2O + H(+)</text>
        <dbReference type="Rhea" id="RHEA:15265"/>
        <dbReference type="ChEBI" id="CHEBI:15377"/>
        <dbReference type="ChEBI" id="CHEBI:15378"/>
        <dbReference type="ChEBI" id="CHEBI:43474"/>
        <dbReference type="ChEBI" id="CHEBI:57279"/>
        <dbReference type="ChEBI" id="CHEBI:57792"/>
        <dbReference type="ChEBI" id="CHEBI:58589"/>
        <dbReference type="EC" id="2.6.99.2"/>
    </reaction>
</comment>
<comment type="pathway">
    <text evidence="1">Cofactor biosynthesis; pyridoxine 5'-phosphate biosynthesis; pyridoxine 5'-phosphate from D-erythrose 4-phosphate: step 5/5.</text>
</comment>
<comment type="subunit">
    <text evidence="1">Homooctamer; tetramer of dimers.</text>
</comment>
<comment type="subcellular location">
    <subcellularLocation>
        <location evidence="1">Cytoplasm</location>
    </subcellularLocation>
</comment>
<comment type="similarity">
    <text evidence="1">Belongs to the PNP synthase family.</text>
</comment>